<evidence type="ECO:0000250" key="1"/>
<evidence type="ECO:0000305" key="2"/>
<evidence type="ECO:0000305" key="3">
    <source>
    </source>
</evidence>
<accession>P48956</accession>
<proteinExistence type="inferred from homology"/>
<dbReference type="EMBL" id="X78208">
    <property type="protein sequence ID" value="CAA55043.1"/>
    <property type="molecule type" value="Genomic_DNA"/>
</dbReference>
<dbReference type="PIR" id="S42490">
    <property type="entry name" value="S42490"/>
</dbReference>
<dbReference type="SMR" id="P48956"/>
<dbReference type="eggNOG" id="COG0261">
    <property type="taxonomic scope" value="Bacteria"/>
</dbReference>
<dbReference type="GO" id="GO:0005737">
    <property type="term" value="C:cytoplasm"/>
    <property type="evidence" value="ECO:0007669"/>
    <property type="project" value="UniProtKB-ARBA"/>
</dbReference>
<dbReference type="GO" id="GO:1990904">
    <property type="term" value="C:ribonucleoprotein complex"/>
    <property type="evidence" value="ECO:0007669"/>
    <property type="project" value="UniProtKB-KW"/>
</dbReference>
<dbReference type="GO" id="GO:0005840">
    <property type="term" value="C:ribosome"/>
    <property type="evidence" value="ECO:0007669"/>
    <property type="project" value="UniProtKB-KW"/>
</dbReference>
<dbReference type="GO" id="GO:0019843">
    <property type="term" value="F:rRNA binding"/>
    <property type="evidence" value="ECO:0007669"/>
    <property type="project" value="UniProtKB-KW"/>
</dbReference>
<dbReference type="InterPro" id="IPR028909">
    <property type="entry name" value="bL21-like"/>
</dbReference>
<dbReference type="InterPro" id="IPR036164">
    <property type="entry name" value="bL21-like_sf"/>
</dbReference>
<dbReference type="Pfam" id="PF00829">
    <property type="entry name" value="Ribosomal_L21p"/>
    <property type="match status" value="1"/>
</dbReference>
<dbReference type="SUPFAM" id="SSF141091">
    <property type="entry name" value="L21p-like"/>
    <property type="match status" value="1"/>
</dbReference>
<gene>
    <name type="primary">rplU</name>
</gene>
<keyword id="KW-0687">Ribonucleoprotein</keyword>
<keyword id="KW-0689">Ribosomal protein</keyword>
<keyword id="KW-0694">RNA-binding</keyword>
<keyword id="KW-0699">rRNA-binding</keyword>
<reference key="1">
    <citation type="journal article" date="1994" name="FEMS Microbiol. Lett.">
        <title>Isolation and characterisation of promoter regions from Streptococcus thermophilus.</title>
        <authorList>
            <person name="Constable A."/>
            <person name="Mollet B."/>
        </authorList>
    </citation>
    <scope>NUCLEOTIDE SEQUENCE [GENOMIC DNA]</scope>
    <source>
        <strain>ST11</strain>
    </source>
</reference>
<comment type="function">
    <text evidence="1">This protein binds to 23S rRNA in the presence of protein L20.</text>
</comment>
<comment type="subunit">
    <text evidence="1">Part of the 50S ribosomal subunit. Contacts protein L20 (By similarity).</text>
</comment>
<comment type="similarity">
    <text evidence="2">Belongs to the bacterial ribosomal protein bL21 family.</text>
</comment>
<comment type="caution">
    <text evidence="3">Was originally thought to be ribosomal protein L20.</text>
</comment>
<name>RL21_STRTR</name>
<organism>
    <name type="scientific">Streptococcus thermophilus</name>
    <dbReference type="NCBI Taxonomy" id="1308"/>
    <lineage>
        <taxon>Bacteria</taxon>
        <taxon>Bacillati</taxon>
        <taxon>Bacillota</taxon>
        <taxon>Bacilli</taxon>
        <taxon>Lactobacillales</taxon>
        <taxon>Streptococcaceae</taxon>
        <taxon>Streptococcus</taxon>
    </lineage>
</organism>
<protein>
    <recommendedName>
        <fullName evidence="2">Large ribosomal subunit protein bL21</fullName>
    </recommendedName>
    <alternativeName>
        <fullName>50S ribosomal protein L21</fullName>
    </alternativeName>
</protein>
<sequence length="31" mass="3365">MSTYAIIKTGGKQVKVEVGQAIYVEKIIPEA</sequence>
<feature type="chain" id="PRO_0000181014" description="Large ribosomal subunit protein bL21">
    <location>
        <begin position="1"/>
        <end position="31" status="greater than"/>
    </location>
</feature>
<feature type="non-terminal residue">
    <location>
        <position position="31"/>
    </location>
</feature>